<comment type="function">
    <text evidence="2 6">Involved in pre-mRNA splicing. Facilitates the cooperative formation of U2/U6 helix II in association with stem II in the spliceosome. Binds to RNA.</text>
</comment>
<comment type="subunit">
    <text evidence="2 3">Belongs to the CWC complex (or CEF1-associated complex), a spliceosome subcomplex composed of the U2, U5 and U6 snRNAs and at least BUD13, BUD31, BRR2, CDC40, CEF1, CLF1, CUS1, CWC2, CWC15, CWC21, CWC22, CWC23, CWC24, CWC25, CWC27, ECM2, HSH155, IST3, ISY1, LEA1, MSL1, NTC20, PRP8, PRP9, PRP11, PRP19, PRP21, PRP22, PRP45, PRP46, SLU7, SMB1, SMD1, SMD2, SMD3, SMX2, SMX3, SNT309, SNU114, SPP2, SYF1, SYF2, RSE1 and YJU2. Interacts with SLU7.</text>
</comment>
<comment type="subcellular location">
    <subcellularLocation>
        <location evidence="4">Nucleus</location>
    </subcellularLocation>
</comment>
<comment type="miscellaneous">
    <text evidence="5">Present with 4260 molecules/cell in log phase SD medium.</text>
</comment>
<comment type="similarity">
    <text evidence="7">Belongs to the SLT11 family.</text>
</comment>
<proteinExistence type="evidence at protein level"/>
<keyword id="KW-0002">3D-structure</keyword>
<keyword id="KW-0507">mRNA processing</keyword>
<keyword id="KW-0508">mRNA splicing</keyword>
<keyword id="KW-0539">Nucleus</keyword>
<keyword id="KW-1185">Reference proteome</keyword>
<keyword id="KW-0694">RNA-binding</keyword>
<keyword id="KW-0747">Spliceosome</keyword>
<reference key="1">
    <citation type="journal article" date="1994" name="EMBO J.">
        <title>Complete DNA sequence of yeast chromosome II.</title>
        <authorList>
            <person name="Feldmann H."/>
            <person name="Aigle M."/>
            <person name="Aljinovic G."/>
            <person name="Andre B."/>
            <person name="Baclet M.C."/>
            <person name="Barthe C."/>
            <person name="Baur A."/>
            <person name="Becam A.-M."/>
            <person name="Biteau N."/>
            <person name="Boles E."/>
            <person name="Brandt T."/>
            <person name="Brendel M."/>
            <person name="Brueckner M."/>
            <person name="Bussereau F."/>
            <person name="Christiansen C."/>
            <person name="Contreras R."/>
            <person name="Crouzet M."/>
            <person name="Cziepluch C."/>
            <person name="Demolis N."/>
            <person name="Delaveau T."/>
            <person name="Doignon F."/>
            <person name="Domdey H."/>
            <person name="Duesterhus S."/>
            <person name="Dubois E."/>
            <person name="Dujon B."/>
            <person name="El Bakkoury M."/>
            <person name="Entian K.-D."/>
            <person name="Feuermann M."/>
            <person name="Fiers W."/>
            <person name="Fobo G.M."/>
            <person name="Fritz C."/>
            <person name="Gassenhuber J."/>
            <person name="Glansdorff N."/>
            <person name="Goffeau A."/>
            <person name="Grivell L.A."/>
            <person name="de Haan M."/>
            <person name="Hein C."/>
            <person name="Herbert C.J."/>
            <person name="Hollenberg C.P."/>
            <person name="Holmstroem K."/>
            <person name="Jacq C."/>
            <person name="Jacquet M."/>
            <person name="Jauniaux J.-C."/>
            <person name="Jonniaux J.-L."/>
            <person name="Kallesoee T."/>
            <person name="Kiesau P."/>
            <person name="Kirchrath L."/>
            <person name="Koetter P."/>
            <person name="Korol S."/>
            <person name="Liebl S."/>
            <person name="Logghe M."/>
            <person name="Lohan A.J.E."/>
            <person name="Louis E.J."/>
            <person name="Li Z.Y."/>
            <person name="Maat M.J."/>
            <person name="Mallet L."/>
            <person name="Mannhaupt G."/>
            <person name="Messenguy F."/>
            <person name="Miosga T."/>
            <person name="Molemans F."/>
            <person name="Mueller S."/>
            <person name="Nasr F."/>
            <person name="Obermaier B."/>
            <person name="Perea J."/>
            <person name="Pierard A."/>
            <person name="Piravandi E."/>
            <person name="Pohl F.M."/>
            <person name="Pohl T.M."/>
            <person name="Potier S."/>
            <person name="Proft M."/>
            <person name="Purnelle B."/>
            <person name="Ramezani Rad M."/>
            <person name="Rieger M."/>
            <person name="Rose M."/>
            <person name="Schaaff-Gerstenschlaeger I."/>
            <person name="Scherens B."/>
            <person name="Schwarzlose C."/>
            <person name="Skala J."/>
            <person name="Slonimski P.P."/>
            <person name="Smits P.H.M."/>
            <person name="Souciet J.-L."/>
            <person name="Steensma H.Y."/>
            <person name="Stucka R."/>
            <person name="Urrestarazu L.A."/>
            <person name="van der Aart Q.J.M."/>
            <person name="Van Dyck L."/>
            <person name="Vassarotti A."/>
            <person name="Vetter I."/>
            <person name="Vierendeels F."/>
            <person name="Vissers S."/>
            <person name="Wagner G."/>
            <person name="de Wergifosse P."/>
            <person name="Wolfe K.H."/>
            <person name="Zagulski M."/>
            <person name="Zimmermann F.K."/>
            <person name="Mewes H.-W."/>
            <person name="Kleine K."/>
        </authorList>
    </citation>
    <scope>NUCLEOTIDE SEQUENCE [LARGE SCALE GENOMIC DNA]</scope>
    <source>
        <strain>ATCC 204508 / S288c</strain>
    </source>
</reference>
<reference key="2">
    <citation type="journal article" date="2014" name="G3 (Bethesda)">
        <title>The reference genome sequence of Saccharomyces cerevisiae: Then and now.</title>
        <authorList>
            <person name="Engel S.R."/>
            <person name="Dietrich F.S."/>
            <person name="Fisk D.G."/>
            <person name="Binkley G."/>
            <person name="Balakrishnan R."/>
            <person name="Costanzo M.C."/>
            <person name="Dwight S.S."/>
            <person name="Hitz B.C."/>
            <person name="Karra K."/>
            <person name="Nash R.S."/>
            <person name="Weng S."/>
            <person name="Wong E.D."/>
            <person name="Lloyd P."/>
            <person name="Skrzypek M.S."/>
            <person name="Miyasato S.R."/>
            <person name="Simison M."/>
            <person name="Cherry J.M."/>
        </authorList>
    </citation>
    <scope>GENOME REANNOTATION</scope>
    <source>
        <strain>ATCC 204508 / S288c</strain>
    </source>
</reference>
<reference key="3">
    <citation type="journal article" date="1998" name="Mol. Cell. Biol.">
        <title>Synthetic lethality of yeast slt mutations with U2 small nuclear RNA mutations suggests functional interactions between U2 and U5 snRNPs that are important for both steps of pre-mRNA splicing.</title>
        <authorList>
            <person name="Xu D."/>
            <person name="Field D.J."/>
            <person name="Tang S.-J."/>
            <person name="Moris A."/>
            <person name="Bobechko B.P."/>
            <person name="Friesen J.D."/>
        </authorList>
    </citation>
    <scope>FUNCTION</scope>
</reference>
<reference key="4">
    <citation type="journal article" date="2001" name="Mol. Cell. Biol.">
        <title>Splicing factor slt11p and its involvement in formation of U2/U6 helix II in activation of the yeast spliceosome.</title>
        <authorList>
            <person name="Xu D."/>
            <person name="Friesen J.D."/>
        </authorList>
    </citation>
    <scope>FUNCTION</scope>
    <scope>INTERACTION WITH SLU7</scope>
</reference>
<reference key="5">
    <citation type="journal article" date="2002" name="Mol. Cell. Biol.">
        <title>Proteomics analysis reveals stable multiprotein complexes in both fission and budding yeasts containing Myb-related Cdc5p/Cef1p, novel pre-mRNA splicing factors, and snRNAs.</title>
        <authorList>
            <person name="Ohi M.D."/>
            <person name="Link A.J."/>
            <person name="Ren L."/>
            <person name="Jennings J.L."/>
            <person name="McDonald W.H."/>
            <person name="Gould K.L."/>
        </authorList>
    </citation>
    <scope>IDENTIFICATION IN THE CWC COMPLEX</scope>
    <scope>IDENTIFICATION BY MASS SPECTROMETRY</scope>
</reference>
<reference key="6">
    <citation type="journal article" date="2003" name="Mol. Cell">
        <title>Assigning function to yeast proteins by integration of technologies.</title>
        <authorList>
            <person name="Hazbun T.R."/>
            <person name="Malmstroem L."/>
            <person name="Anderson S."/>
            <person name="Graczyk B.J."/>
            <person name="Fox B."/>
            <person name="Riffle M."/>
            <person name="Sundin B.A."/>
            <person name="Aranda J.D."/>
            <person name="McDonald W.H."/>
            <person name="Chiu C.-H."/>
            <person name="Snydsman B.E."/>
            <person name="Bradley P."/>
            <person name="Muller E.G.D."/>
            <person name="Fields S."/>
            <person name="Baker D."/>
            <person name="Yates J.R. III"/>
            <person name="Davis T.N."/>
        </authorList>
    </citation>
    <scope>IDENTIFICATION BY MASS SPECTROMETRY</scope>
</reference>
<reference key="7">
    <citation type="journal article" date="2003" name="Nature">
        <title>Global analysis of protein localization in budding yeast.</title>
        <authorList>
            <person name="Huh W.-K."/>
            <person name="Falvo J.V."/>
            <person name="Gerke L.C."/>
            <person name="Carroll A.S."/>
            <person name="Howson R.W."/>
            <person name="Weissman J.S."/>
            <person name="O'Shea E.K."/>
        </authorList>
    </citation>
    <scope>SUBCELLULAR LOCATION [LARGE SCALE ANALYSIS]</scope>
</reference>
<reference key="8">
    <citation type="journal article" date="2003" name="Nature">
        <title>Global analysis of protein expression in yeast.</title>
        <authorList>
            <person name="Ghaemmaghami S."/>
            <person name="Huh W.-K."/>
            <person name="Bower K."/>
            <person name="Howson R.W."/>
            <person name="Belle A."/>
            <person name="Dephoure N."/>
            <person name="O'Shea E.K."/>
            <person name="Weissman J.S."/>
        </authorList>
    </citation>
    <scope>LEVEL OF PROTEIN EXPRESSION [LARGE SCALE ANALYSIS]</scope>
</reference>
<sequence>MNDEINEPPPNICEQCLGDEANIRMTKIPQGSECKICTLPFTLYHFKTSKRSNNIIKTLICVRCATQRNICQCCMLDSRWHIPIQLRDHLISLVNEENVMTEEAKNDMMKRFLSLKNVKLGGAQITSDPSEADNIVDKLKNILLRATSDGPSTPLIKNTTALYKNEKGANEVKNLEKYASVDISHILKKLPLNESFLKNPSTKSFFLYNIDASIPEWKITDTVSQLLGIKKWKDGNSLSLIVNHKAKCGGLRFQSSELGERFVSKISETLVTPKGLKRGVLLIDRFRIFIIPWSSGFSAASFGTNTAENIKLSLSLNKLIQLELGLSFPTKSTDNAKNDKKKTSKKVHKDRSKKSKPRANKLTI</sequence>
<name>SLT11_YEAST</name>
<dbReference type="EMBL" id="Z35934">
    <property type="protein sequence ID" value="CAA85008.1"/>
    <property type="molecule type" value="Genomic_DNA"/>
</dbReference>
<dbReference type="EMBL" id="Z35935">
    <property type="protein sequence ID" value="CAA85009.1"/>
    <property type="molecule type" value="Genomic_DNA"/>
</dbReference>
<dbReference type="EMBL" id="BK006936">
    <property type="protein sequence ID" value="DAA07184.1"/>
    <property type="molecule type" value="Genomic_DNA"/>
</dbReference>
<dbReference type="PIR" id="S45925">
    <property type="entry name" value="S45925"/>
</dbReference>
<dbReference type="RefSeq" id="NP_009621.3">
    <property type="nucleotide sequence ID" value="NM_001178413.3"/>
</dbReference>
<dbReference type="PDB" id="5GM6">
    <property type="method" value="EM"/>
    <property type="resolution" value="3.50 A"/>
    <property type="chains" value="Q=1-364"/>
</dbReference>
<dbReference type="PDB" id="5GMK">
    <property type="method" value="EM"/>
    <property type="resolution" value="3.40 A"/>
    <property type="chains" value="Q=1-364"/>
</dbReference>
<dbReference type="PDB" id="5LJ3">
    <property type="method" value="EM"/>
    <property type="resolution" value="3.80 A"/>
    <property type="chains" value="N=1-364"/>
</dbReference>
<dbReference type="PDB" id="5LJ5">
    <property type="method" value="EM"/>
    <property type="resolution" value="3.80 A"/>
    <property type="chains" value="N=1-364"/>
</dbReference>
<dbReference type="PDB" id="5LQW">
    <property type="method" value="EM"/>
    <property type="resolution" value="5.80 A"/>
    <property type="chains" value="D=1-364"/>
</dbReference>
<dbReference type="PDB" id="5MPS">
    <property type="method" value="EM"/>
    <property type="resolution" value="3.85 A"/>
    <property type="chains" value="N=1-364"/>
</dbReference>
<dbReference type="PDB" id="5MQ0">
    <property type="method" value="EM"/>
    <property type="resolution" value="4.17 A"/>
    <property type="chains" value="N=1-364"/>
</dbReference>
<dbReference type="PDB" id="5WSG">
    <property type="method" value="EM"/>
    <property type="resolution" value="4.00 A"/>
    <property type="chains" value="Q=1-364"/>
</dbReference>
<dbReference type="PDB" id="5Y88">
    <property type="method" value="EM"/>
    <property type="resolution" value="3.70 A"/>
    <property type="chains" value="M=1-364"/>
</dbReference>
<dbReference type="PDB" id="5YLZ">
    <property type="method" value="EM"/>
    <property type="resolution" value="3.60 A"/>
    <property type="chains" value="M=1-364"/>
</dbReference>
<dbReference type="PDB" id="6BK8">
    <property type="method" value="EM"/>
    <property type="resolution" value="3.30 A"/>
    <property type="chains" value="F=1-364"/>
</dbReference>
<dbReference type="PDB" id="6EXN">
    <property type="method" value="EM"/>
    <property type="resolution" value="3.70 A"/>
    <property type="chains" value="N=1-364"/>
</dbReference>
<dbReference type="PDB" id="6J6G">
    <property type="method" value="EM"/>
    <property type="resolution" value="3.20 A"/>
    <property type="chains" value="Q=1-364"/>
</dbReference>
<dbReference type="PDB" id="6J6H">
    <property type="method" value="EM"/>
    <property type="resolution" value="3.60 A"/>
    <property type="chains" value="Q=1-364"/>
</dbReference>
<dbReference type="PDB" id="6J6N">
    <property type="method" value="EM"/>
    <property type="resolution" value="3.86 A"/>
    <property type="chains" value="Q=1-364"/>
</dbReference>
<dbReference type="PDB" id="6J6Q">
    <property type="method" value="EM"/>
    <property type="resolution" value="3.70 A"/>
    <property type="chains" value="Q=1-364"/>
</dbReference>
<dbReference type="PDB" id="9DTR">
    <property type="method" value="EM"/>
    <property type="resolution" value="2.31 A"/>
    <property type="chains" value="N=1-364"/>
</dbReference>
<dbReference type="PDBsum" id="5GM6"/>
<dbReference type="PDBsum" id="5GMK"/>
<dbReference type="PDBsum" id="5LJ3"/>
<dbReference type="PDBsum" id="5LJ5"/>
<dbReference type="PDBsum" id="5LQW"/>
<dbReference type="PDBsum" id="5MPS"/>
<dbReference type="PDBsum" id="5MQ0"/>
<dbReference type="PDBsum" id="5WSG"/>
<dbReference type="PDBsum" id="5Y88"/>
<dbReference type="PDBsum" id="5YLZ"/>
<dbReference type="PDBsum" id="6BK8"/>
<dbReference type="PDBsum" id="6EXN"/>
<dbReference type="PDBsum" id="6J6G"/>
<dbReference type="PDBsum" id="6J6H"/>
<dbReference type="PDBsum" id="6J6N"/>
<dbReference type="PDBsum" id="6J6Q"/>
<dbReference type="PDBsum" id="9DTR"/>
<dbReference type="EMDB" id="EMD-0686"/>
<dbReference type="EMDB" id="EMD-0687"/>
<dbReference type="EMDB" id="EMD-0691"/>
<dbReference type="EMDB" id="EMD-0692"/>
<dbReference type="EMDB" id="EMD-3539"/>
<dbReference type="EMDB" id="EMD-3541"/>
<dbReference type="EMDB" id="EMD-3979"/>
<dbReference type="EMDB" id="EMD-4055"/>
<dbReference type="EMDB" id="EMD-4057"/>
<dbReference type="EMDB" id="EMD-47157"/>
<dbReference type="EMDB" id="EMD-6817"/>
<dbReference type="EMDB" id="EMD-6839"/>
<dbReference type="EMDB" id="EMD-7109"/>
<dbReference type="EMDB" id="EMD-9524"/>
<dbReference type="EMDB" id="EMD-9525"/>
<dbReference type="SMR" id="P38241"/>
<dbReference type="BioGRID" id="32768">
    <property type="interactions" value="206"/>
</dbReference>
<dbReference type="ComplexPortal" id="CPX-1651">
    <property type="entry name" value="PRP19-associated complex"/>
</dbReference>
<dbReference type="DIP" id="DIP-5359N"/>
<dbReference type="FunCoup" id="P38241">
    <property type="interactions" value="201"/>
</dbReference>
<dbReference type="IntAct" id="P38241">
    <property type="interactions" value="49"/>
</dbReference>
<dbReference type="MINT" id="P38241"/>
<dbReference type="STRING" id="4932.YBR065C"/>
<dbReference type="iPTMnet" id="P38241"/>
<dbReference type="PaxDb" id="4932-YBR065C"/>
<dbReference type="PeptideAtlas" id="P38241"/>
<dbReference type="EnsemblFungi" id="YBR065C_mRNA">
    <property type="protein sequence ID" value="YBR065C"/>
    <property type="gene ID" value="YBR065C"/>
</dbReference>
<dbReference type="GeneID" id="852357"/>
<dbReference type="KEGG" id="sce:YBR065C"/>
<dbReference type="AGR" id="SGD:S000000269"/>
<dbReference type="SGD" id="S000000269">
    <property type="gene designation" value="ECM2"/>
</dbReference>
<dbReference type="VEuPathDB" id="FungiDB:YBR065C"/>
<dbReference type="eggNOG" id="KOG0153">
    <property type="taxonomic scope" value="Eukaryota"/>
</dbReference>
<dbReference type="HOGENOM" id="CLU_027112_1_1_1"/>
<dbReference type="InParanoid" id="P38241"/>
<dbReference type="OMA" id="RNVCQCC"/>
<dbReference type="OrthoDB" id="10259600at2759"/>
<dbReference type="BioCyc" id="YEAST:G3O-29034-MONOMER"/>
<dbReference type="BioGRID-ORCS" id="852357">
    <property type="hits" value="0 hits in 10 CRISPR screens"/>
</dbReference>
<dbReference type="PRO" id="PR:P38241"/>
<dbReference type="Proteomes" id="UP000002311">
    <property type="component" value="Chromosome II"/>
</dbReference>
<dbReference type="RNAct" id="P38241">
    <property type="molecule type" value="protein"/>
</dbReference>
<dbReference type="GO" id="GO:0005634">
    <property type="term" value="C:nucleus"/>
    <property type="evidence" value="ECO:0007005"/>
    <property type="project" value="SGD"/>
</dbReference>
<dbReference type="GO" id="GO:0000974">
    <property type="term" value="C:Prp19 complex"/>
    <property type="evidence" value="ECO:0000353"/>
    <property type="project" value="ComplexPortal"/>
</dbReference>
<dbReference type="GO" id="GO:0071006">
    <property type="term" value="C:U2-type catalytic step 1 spliceosome"/>
    <property type="evidence" value="ECO:0000318"/>
    <property type="project" value="GO_Central"/>
</dbReference>
<dbReference type="GO" id="GO:0071007">
    <property type="term" value="C:U2-type catalytic step 2 spliceosome"/>
    <property type="evidence" value="ECO:0000318"/>
    <property type="project" value="GO_Central"/>
</dbReference>
<dbReference type="GO" id="GO:0036002">
    <property type="term" value="F:pre-mRNA binding"/>
    <property type="evidence" value="ECO:0000318"/>
    <property type="project" value="GO_Central"/>
</dbReference>
<dbReference type="GO" id="GO:0017070">
    <property type="term" value="F:U6 snRNA binding"/>
    <property type="evidence" value="ECO:0000314"/>
    <property type="project" value="SGD"/>
</dbReference>
<dbReference type="GO" id="GO:0000398">
    <property type="term" value="P:mRNA splicing, via spliceosome"/>
    <property type="evidence" value="ECO:0000316"/>
    <property type="project" value="SGD"/>
</dbReference>
<dbReference type="CDD" id="cd12265">
    <property type="entry name" value="RRM_SLT11"/>
    <property type="match status" value="1"/>
</dbReference>
<dbReference type="InterPro" id="IPR039171">
    <property type="entry name" value="Cwc2/Slt11"/>
</dbReference>
<dbReference type="InterPro" id="IPR034356">
    <property type="entry name" value="Slt11_RRM"/>
</dbReference>
<dbReference type="InterPro" id="IPR048995">
    <property type="entry name" value="STL11/RBM22-like_N"/>
</dbReference>
<dbReference type="PANTHER" id="PTHR14089">
    <property type="entry name" value="PRE-MRNA-SPLICING FACTOR RBM22"/>
    <property type="match status" value="1"/>
</dbReference>
<dbReference type="PANTHER" id="PTHR14089:SF6">
    <property type="entry name" value="PRE-MRNA-SPLICING FACTOR RBM22"/>
    <property type="match status" value="1"/>
</dbReference>
<dbReference type="Pfam" id="PF21369">
    <property type="entry name" value="STL11_N"/>
    <property type="match status" value="1"/>
</dbReference>
<gene>
    <name type="primary">ECM2</name>
    <name type="synonym">SLT11</name>
    <name type="ordered locus">YBR065C</name>
    <name type="ORF">YBR0614</name>
</gene>
<evidence type="ECO:0000256" key="1">
    <source>
        <dbReference type="SAM" id="MobiDB-lite"/>
    </source>
</evidence>
<evidence type="ECO:0000269" key="2">
    <source>
    </source>
</evidence>
<evidence type="ECO:0000269" key="3">
    <source>
    </source>
</evidence>
<evidence type="ECO:0000269" key="4">
    <source>
    </source>
</evidence>
<evidence type="ECO:0000269" key="5">
    <source>
    </source>
</evidence>
<evidence type="ECO:0000269" key="6">
    <source>
    </source>
</evidence>
<evidence type="ECO:0000305" key="7"/>
<evidence type="ECO:0007829" key="8">
    <source>
        <dbReference type="PDB" id="5GMK"/>
    </source>
</evidence>
<evidence type="ECO:0007829" key="9">
    <source>
        <dbReference type="PDB" id="6J6G"/>
    </source>
</evidence>
<evidence type="ECO:0007829" key="10">
    <source>
        <dbReference type="PDB" id="9DTR"/>
    </source>
</evidence>
<protein>
    <recommendedName>
        <fullName>Pre-mRNA-splicing factor SLT11</fullName>
    </recommendedName>
    <alternativeName>
        <fullName>Extracellular mutant protein 2</fullName>
    </alternativeName>
    <alternativeName>
        <fullName>Synthetic lethality with U2 protein 11</fullName>
    </alternativeName>
</protein>
<feature type="chain" id="PRO_0000212432" description="Pre-mRNA-splicing factor SLT11">
    <location>
        <begin position="1"/>
        <end position="364"/>
    </location>
</feature>
<feature type="region of interest" description="Disordered" evidence="1">
    <location>
        <begin position="331"/>
        <end position="364"/>
    </location>
</feature>
<feature type="compositionally biased region" description="Basic residues" evidence="1">
    <location>
        <begin position="339"/>
        <end position="364"/>
    </location>
</feature>
<feature type="turn" evidence="8">
    <location>
        <begin position="4"/>
        <end position="6"/>
    </location>
</feature>
<feature type="helix" evidence="10">
    <location>
        <begin position="14"/>
        <end position="17"/>
    </location>
</feature>
<feature type="strand" evidence="10">
    <location>
        <begin position="23"/>
        <end position="33"/>
    </location>
</feature>
<feature type="turn" evidence="10">
    <location>
        <begin position="35"/>
        <end position="37"/>
    </location>
</feature>
<feature type="strand" evidence="10">
    <location>
        <begin position="40"/>
        <end position="46"/>
    </location>
</feature>
<feature type="strand" evidence="9">
    <location>
        <begin position="48"/>
        <end position="51"/>
    </location>
</feature>
<feature type="helix" evidence="10">
    <location>
        <begin position="62"/>
        <end position="68"/>
    </location>
</feature>
<feature type="turn" evidence="10">
    <location>
        <begin position="72"/>
        <end position="74"/>
    </location>
</feature>
<feature type="turn" evidence="10">
    <location>
        <begin position="78"/>
        <end position="80"/>
    </location>
</feature>
<feature type="helix" evidence="10">
    <location>
        <begin position="84"/>
        <end position="95"/>
    </location>
</feature>
<feature type="helix" evidence="10">
    <location>
        <begin position="107"/>
        <end position="114"/>
    </location>
</feature>
<feature type="helix" evidence="10">
    <location>
        <begin position="123"/>
        <end position="127"/>
    </location>
</feature>
<feature type="helix" evidence="10">
    <location>
        <begin position="129"/>
        <end position="144"/>
    </location>
</feature>
<feature type="helix" evidence="10">
    <location>
        <begin position="183"/>
        <end position="189"/>
    </location>
</feature>
<feature type="strand" evidence="10">
    <location>
        <begin position="198"/>
        <end position="200"/>
    </location>
</feature>
<feature type="strand" evidence="10">
    <location>
        <begin position="203"/>
        <end position="208"/>
    </location>
</feature>
<feature type="strand" evidence="9">
    <location>
        <begin position="212"/>
        <end position="214"/>
    </location>
</feature>
<feature type="helix" evidence="10">
    <location>
        <begin position="216"/>
        <end position="227"/>
    </location>
</feature>
<feature type="helix" evidence="9">
    <location>
        <begin position="232"/>
        <end position="235"/>
    </location>
</feature>
<feature type="strand" evidence="10">
    <location>
        <begin position="239"/>
        <end position="243"/>
    </location>
</feature>
<feature type="turn" evidence="10">
    <location>
        <begin position="244"/>
        <end position="247"/>
    </location>
</feature>
<feature type="strand" evidence="10">
    <location>
        <begin position="248"/>
        <end position="252"/>
    </location>
</feature>
<feature type="helix" evidence="10">
    <location>
        <begin position="256"/>
        <end position="263"/>
    </location>
</feature>
<feature type="strand" evidence="9">
    <location>
        <begin position="269"/>
        <end position="272"/>
    </location>
</feature>
<feature type="strand" evidence="10">
    <location>
        <begin position="279"/>
        <end position="283"/>
    </location>
</feature>
<feature type="strand" evidence="10">
    <location>
        <begin position="286"/>
        <end position="292"/>
    </location>
</feature>
<feature type="helix" evidence="10">
    <location>
        <begin position="299"/>
        <end position="302"/>
    </location>
</feature>
<feature type="helix" evidence="10">
    <location>
        <begin position="306"/>
        <end position="323"/>
    </location>
</feature>
<organism>
    <name type="scientific">Saccharomyces cerevisiae (strain ATCC 204508 / S288c)</name>
    <name type="common">Baker's yeast</name>
    <dbReference type="NCBI Taxonomy" id="559292"/>
    <lineage>
        <taxon>Eukaryota</taxon>
        <taxon>Fungi</taxon>
        <taxon>Dikarya</taxon>
        <taxon>Ascomycota</taxon>
        <taxon>Saccharomycotina</taxon>
        <taxon>Saccharomycetes</taxon>
        <taxon>Saccharomycetales</taxon>
        <taxon>Saccharomycetaceae</taxon>
        <taxon>Saccharomyces</taxon>
    </lineage>
</organism>
<accession>P38241</accession>
<accession>D6VQ64</accession>
<accession>P89497</accession>